<organism>
    <name type="scientific">Hydrogenovibrio crunogenus (strain DSM 25203 / XCL-2)</name>
    <name type="common">Thiomicrospira crunogena</name>
    <dbReference type="NCBI Taxonomy" id="317025"/>
    <lineage>
        <taxon>Bacteria</taxon>
        <taxon>Pseudomonadati</taxon>
        <taxon>Pseudomonadota</taxon>
        <taxon>Gammaproteobacteria</taxon>
        <taxon>Thiotrichales</taxon>
        <taxon>Piscirickettsiaceae</taxon>
        <taxon>Hydrogenovibrio</taxon>
    </lineage>
</organism>
<sequence>MADVDVKKAVVLLSGGLDSATVLAIAQAQGFECHTISFDYGQRHRAELIAAERISRVSGAKTHRVMEMNMHAIGGSALTDDSIDVPVSGVEKEMIPVTYVPARNTVFLSYALALAEVLEADDIFIGVNAVDYSGYPDCRPEYIAAYEKMANLATKAGVEGHKMHIQTPLIDLTKAEIIQTGVKLGVDYSQTVSCYQADKNGAACGICDSCRLRKQGFENAGVTDPTIYASNL</sequence>
<keyword id="KW-0067">ATP-binding</keyword>
<keyword id="KW-0436">Ligase</keyword>
<keyword id="KW-0479">Metal-binding</keyword>
<keyword id="KW-0547">Nucleotide-binding</keyword>
<keyword id="KW-0671">Queuosine biosynthesis</keyword>
<keyword id="KW-0862">Zinc</keyword>
<reference key="1">
    <citation type="journal article" date="2006" name="PLoS Biol.">
        <title>The genome of deep-sea vent chemolithoautotroph Thiomicrospira crunogena XCL-2.</title>
        <authorList>
            <person name="Scott K.M."/>
            <person name="Sievert S.M."/>
            <person name="Abril F.N."/>
            <person name="Ball L.A."/>
            <person name="Barrett C.J."/>
            <person name="Blake R.A."/>
            <person name="Boller A.J."/>
            <person name="Chain P.S.G."/>
            <person name="Clark J.A."/>
            <person name="Davis C.R."/>
            <person name="Detter C."/>
            <person name="Do K.F."/>
            <person name="Dobrinski K.P."/>
            <person name="Faza B.I."/>
            <person name="Fitzpatrick K.A."/>
            <person name="Freyermuth S.K."/>
            <person name="Harmer T.L."/>
            <person name="Hauser L.J."/>
            <person name="Huegler M."/>
            <person name="Kerfeld C.A."/>
            <person name="Klotz M.G."/>
            <person name="Kong W.W."/>
            <person name="Land M."/>
            <person name="Lapidus A."/>
            <person name="Larimer F.W."/>
            <person name="Longo D.L."/>
            <person name="Lucas S."/>
            <person name="Malfatti S.A."/>
            <person name="Massey S.E."/>
            <person name="Martin D.D."/>
            <person name="McCuddin Z."/>
            <person name="Meyer F."/>
            <person name="Moore J.L."/>
            <person name="Ocampo L.H. Jr."/>
            <person name="Paul J.H."/>
            <person name="Paulsen I.T."/>
            <person name="Reep D.K."/>
            <person name="Ren Q."/>
            <person name="Ross R.L."/>
            <person name="Sato P.Y."/>
            <person name="Thomas P."/>
            <person name="Tinkham L.E."/>
            <person name="Zeruth G.T."/>
        </authorList>
    </citation>
    <scope>NUCLEOTIDE SEQUENCE [LARGE SCALE GENOMIC DNA]</scope>
    <source>
        <strain>DSM 25203 / XCL-2</strain>
    </source>
</reference>
<name>QUEC_HYDCU</name>
<accession>Q31H76</accession>
<protein>
    <recommendedName>
        <fullName evidence="1">7-cyano-7-deazaguanine synthase</fullName>
        <ecNumber evidence="1">6.3.4.20</ecNumber>
    </recommendedName>
    <alternativeName>
        <fullName evidence="1">7-cyano-7-carbaguanine synthase</fullName>
    </alternativeName>
    <alternativeName>
        <fullName evidence="1">PreQ(0) synthase</fullName>
    </alternativeName>
    <alternativeName>
        <fullName evidence="1">Queuosine biosynthesis protein QueC</fullName>
    </alternativeName>
</protein>
<evidence type="ECO:0000255" key="1">
    <source>
        <dbReference type="HAMAP-Rule" id="MF_01633"/>
    </source>
</evidence>
<feature type="chain" id="PRO_0000246953" description="7-cyano-7-deazaguanine synthase">
    <location>
        <begin position="1"/>
        <end position="232"/>
    </location>
</feature>
<feature type="binding site" evidence="1">
    <location>
        <begin position="13"/>
        <end position="23"/>
    </location>
    <ligand>
        <name>ATP</name>
        <dbReference type="ChEBI" id="CHEBI:30616"/>
    </ligand>
</feature>
<feature type="binding site" evidence="1">
    <location>
        <position position="194"/>
    </location>
    <ligand>
        <name>Zn(2+)</name>
        <dbReference type="ChEBI" id="CHEBI:29105"/>
    </ligand>
</feature>
<feature type="binding site" evidence="1">
    <location>
        <position position="204"/>
    </location>
    <ligand>
        <name>Zn(2+)</name>
        <dbReference type="ChEBI" id="CHEBI:29105"/>
    </ligand>
</feature>
<feature type="binding site" evidence="1">
    <location>
        <position position="207"/>
    </location>
    <ligand>
        <name>Zn(2+)</name>
        <dbReference type="ChEBI" id="CHEBI:29105"/>
    </ligand>
</feature>
<feature type="binding site" evidence="1">
    <location>
        <position position="210"/>
    </location>
    <ligand>
        <name>Zn(2+)</name>
        <dbReference type="ChEBI" id="CHEBI:29105"/>
    </ligand>
</feature>
<dbReference type="EC" id="6.3.4.20" evidence="1"/>
<dbReference type="EMBL" id="CP000109">
    <property type="protein sequence ID" value="ABB41497.1"/>
    <property type="molecule type" value="Genomic_DNA"/>
</dbReference>
<dbReference type="SMR" id="Q31H76"/>
<dbReference type="STRING" id="317025.Tcr_0901"/>
<dbReference type="KEGG" id="tcx:Tcr_0901"/>
<dbReference type="eggNOG" id="COG0603">
    <property type="taxonomic scope" value="Bacteria"/>
</dbReference>
<dbReference type="HOGENOM" id="CLU_081854_1_1_6"/>
<dbReference type="OrthoDB" id="9789567at2"/>
<dbReference type="UniPathway" id="UPA00391"/>
<dbReference type="GO" id="GO:0005524">
    <property type="term" value="F:ATP binding"/>
    <property type="evidence" value="ECO:0007669"/>
    <property type="project" value="UniProtKB-UniRule"/>
</dbReference>
<dbReference type="GO" id="GO:0016879">
    <property type="term" value="F:ligase activity, forming carbon-nitrogen bonds"/>
    <property type="evidence" value="ECO:0007669"/>
    <property type="project" value="UniProtKB-UniRule"/>
</dbReference>
<dbReference type="GO" id="GO:0008270">
    <property type="term" value="F:zinc ion binding"/>
    <property type="evidence" value="ECO:0007669"/>
    <property type="project" value="UniProtKB-UniRule"/>
</dbReference>
<dbReference type="GO" id="GO:0008616">
    <property type="term" value="P:queuosine biosynthetic process"/>
    <property type="evidence" value="ECO:0007669"/>
    <property type="project" value="UniProtKB-UniRule"/>
</dbReference>
<dbReference type="CDD" id="cd01995">
    <property type="entry name" value="QueC-like"/>
    <property type="match status" value="1"/>
</dbReference>
<dbReference type="FunFam" id="3.40.50.620:FF:000131">
    <property type="entry name" value="7-cyano-7-deazaguanine synthase"/>
    <property type="match status" value="1"/>
</dbReference>
<dbReference type="Gene3D" id="3.40.50.620">
    <property type="entry name" value="HUPs"/>
    <property type="match status" value="1"/>
</dbReference>
<dbReference type="HAMAP" id="MF_01633">
    <property type="entry name" value="QueC"/>
    <property type="match status" value="1"/>
</dbReference>
<dbReference type="InterPro" id="IPR018317">
    <property type="entry name" value="QueC"/>
</dbReference>
<dbReference type="InterPro" id="IPR014729">
    <property type="entry name" value="Rossmann-like_a/b/a_fold"/>
</dbReference>
<dbReference type="NCBIfam" id="TIGR00364">
    <property type="entry name" value="7-cyano-7-deazaguanine synthase QueC"/>
    <property type="match status" value="1"/>
</dbReference>
<dbReference type="PANTHER" id="PTHR42914">
    <property type="entry name" value="7-CYANO-7-DEAZAGUANINE SYNTHASE"/>
    <property type="match status" value="1"/>
</dbReference>
<dbReference type="PANTHER" id="PTHR42914:SF1">
    <property type="entry name" value="7-CYANO-7-DEAZAGUANINE SYNTHASE"/>
    <property type="match status" value="1"/>
</dbReference>
<dbReference type="Pfam" id="PF06508">
    <property type="entry name" value="QueC"/>
    <property type="match status" value="1"/>
</dbReference>
<dbReference type="PIRSF" id="PIRSF006293">
    <property type="entry name" value="ExsB"/>
    <property type="match status" value="1"/>
</dbReference>
<dbReference type="SUPFAM" id="SSF52402">
    <property type="entry name" value="Adenine nucleotide alpha hydrolases-like"/>
    <property type="match status" value="1"/>
</dbReference>
<gene>
    <name evidence="1" type="primary">queC</name>
    <name type="ordered locus">Tcr_0901</name>
</gene>
<comment type="function">
    <text evidence="1">Catalyzes the ATP-dependent conversion of 7-carboxy-7-deazaguanine (CDG) to 7-cyano-7-deazaguanine (preQ(0)).</text>
</comment>
<comment type="catalytic activity">
    <reaction evidence="1">
        <text>7-carboxy-7-deazaguanine + NH4(+) + ATP = 7-cyano-7-deazaguanine + ADP + phosphate + H2O + H(+)</text>
        <dbReference type="Rhea" id="RHEA:27982"/>
        <dbReference type="ChEBI" id="CHEBI:15377"/>
        <dbReference type="ChEBI" id="CHEBI:15378"/>
        <dbReference type="ChEBI" id="CHEBI:28938"/>
        <dbReference type="ChEBI" id="CHEBI:30616"/>
        <dbReference type="ChEBI" id="CHEBI:43474"/>
        <dbReference type="ChEBI" id="CHEBI:45075"/>
        <dbReference type="ChEBI" id="CHEBI:61036"/>
        <dbReference type="ChEBI" id="CHEBI:456216"/>
        <dbReference type="EC" id="6.3.4.20"/>
    </reaction>
</comment>
<comment type="cofactor">
    <cofactor evidence="1">
        <name>Zn(2+)</name>
        <dbReference type="ChEBI" id="CHEBI:29105"/>
    </cofactor>
    <text evidence="1">Binds 1 zinc ion per subunit.</text>
</comment>
<comment type="pathway">
    <text evidence="1">Purine metabolism; 7-cyano-7-deazaguanine biosynthesis.</text>
</comment>
<comment type="similarity">
    <text evidence="1">Belongs to the QueC family.</text>
</comment>
<proteinExistence type="inferred from homology"/>